<proteinExistence type="inferred from homology"/>
<protein>
    <recommendedName>
        <fullName evidence="1">Ubiquinone/menaquinone biosynthesis C-methyltransferase UbiE</fullName>
        <ecNumber evidence="1">2.1.1.163</ecNumber>
        <ecNumber evidence="1">2.1.1.201</ecNumber>
    </recommendedName>
    <alternativeName>
        <fullName evidence="1">2-methoxy-6-polyprenyl-1,4-benzoquinol methylase</fullName>
    </alternativeName>
    <alternativeName>
        <fullName evidence="1">Demethylmenaquinone methyltransferase</fullName>
    </alternativeName>
</protein>
<comment type="function">
    <text evidence="1">Methyltransferase required for the conversion of demethylmenaquinol (DMKH2) to menaquinol (MKH2) and the conversion of 2-polyprenyl-6-methoxy-1,4-benzoquinol (DDMQH2) to 2-polyprenyl-3-methyl-6-methoxy-1,4-benzoquinol (DMQH2).</text>
</comment>
<comment type="catalytic activity">
    <reaction evidence="1">
        <text>a 2-demethylmenaquinol + S-adenosyl-L-methionine = a menaquinol + S-adenosyl-L-homocysteine + H(+)</text>
        <dbReference type="Rhea" id="RHEA:42640"/>
        <dbReference type="Rhea" id="RHEA-COMP:9539"/>
        <dbReference type="Rhea" id="RHEA-COMP:9563"/>
        <dbReference type="ChEBI" id="CHEBI:15378"/>
        <dbReference type="ChEBI" id="CHEBI:18151"/>
        <dbReference type="ChEBI" id="CHEBI:55437"/>
        <dbReference type="ChEBI" id="CHEBI:57856"/>
        <dbReference type="ChEBI" id="CHEBI:59789"/>
        <dbReference type="EC" id="2.1.1.163"/>
    </reaction>
</comment>
<comment type="catalytic activity">
    <reaction evidence="1">
        <text>a 2-methoxy-6-(all-trans-polyprenyl)benzene-1,4-diol + S-adenosyl-L-methionine = a 5-methoxy-2-methyl-3-(all-trans-polyprenyl)benzene-1,4-diol + S-adenosyl-L-homocysteine + H(+)</text>
        <dbReference type="Rhea" id="RHEA:28286"/>
        <dbReference type="Rhea" id="RHEA-COMP:10858"/>
        <dbReference type="Rhea" id="RHEA-COMP:10859"/>
        <dbReference type="ChEBI" id="CHEBI:15378"/>
        <dbReference type="ChEBI" id="CHEBI:57856"/>
        <dbReference type="ChEBI" id="CHEBI:59789"/>
        <dbReference type="ChEBI" id="CHEBI:84166"/>
        <dbReference type="ChEBI" id="CHEBI:84167"/>
        <dbReference type="EC" id="2.1.1.201"/>
    </reaction>
</comment>
<comment type="pathway">
    <text evidence="1">Quinol/quinone metabolism; menaquinone biosynthesis; menaquinol from 1,4-dihydroxy-2-naphthoate: step 2/2.</text>
</comment>
<comment type="pathway">
    <text evidence="1">Cofactor biosynthesis; ubiquinone biosynthesis.</text>
</comment>
<comment type="similarity">
    <text evidence="1">Belongs to the class I-like SAM-binding methyltransferase superfamily. MenG/UbiE family.</text>
</comment>
<organism>
    <name type="scientific">Bdellovibrio bacteriovorus (strain ATCC 15356 / DSM 50701 / NCIMB 9529 / HD100)</name>
    <dbReference type="NCBI Taxonomy" id="264462"/>
    <lineage>
        <taxon>Bacteria</taxon>
        <taxon>Pseudomonadati</taxon>
        <taxon>Bdellovibrionota</taxon>
        <taxon>Bdellovibrionia</taxon>
        <taxon>Bdellovibrionales</taxon>
        <taxon>Pseudobdellovibrionaceae</taxon>
        <taxon>Bdellovibrio</taxon>
    </lineage>
</organism>
<gene>
    <name evidence="1" type="primary">ubiE</name>
    <name type="ordered locus">Bd3487</name>
</gene>
<keyword id="KW-0474">Menaquinone biosynthesis</keyword>
<keyword id="KW-0489">Methyltransferase</keyword>
<keyword id="KW-1185">Reference proteome</keyword>
<keyword id="KW-0949">S-adenosyl-L-methionine</keyword>
<keyword id="KW-0808">Transferase</keyword>
<keyword id="KW-0831">Ubiquinone biosynthesis</keyword>
<dbReference type="EC" id="2.1.1.163" evidence="1"/>
<dbReference type="EC" id="2.1.1.201" evidence="1"/>
<dbReference type="EMBL" id="BX842655">
    <property type="protein sequence ID" value="CAE78279.1"/>
    <property type="molecule type" value="Genomic_DNA"/>
</dbReference>
<dbReference type="RefSeq" id="WP_011165817.1">
    <property type="nucleotide sequence ID" value="NC_005363.1"/>
</dbReference>
<dbReference type="SMR" id="Q6MHQ3"/>
<dbReference type="STRING" id="264462.Bd3487"/>
<dbReference type="GeneID" id="93014294"/>
<dbReference type="KEGG" id="bba:Bd3487"/>
<dbReference type="eggNOG" id="COG2226">
    <property type="taxonomic scope" value="Bacteria"/>
</dbReference>
<dbReference type="HOGENOM" id="CLU_037990_0_0_7"/>
<dbReference type="UniPathway" id="UPA00079">
    <property type="reaction ID" value="UER00169"/>
</dbReference>
<dbReference type="UniPathway" id="UPA00232"/>
<dbReference type="Proteomes" id="UP000008080">
    <property type="component" value="Chromosome"/>
</dbReference>
<dbReference type="GO" id="GO:0008425">
    <property type="term" value="F:2-methoxy-6-polyprenyl-1,4-benzoquinol methyltransferase activity"/>
    <property type="evidence" value="ECO:0007669"/>
    <property type="project" value="UniProtKB-EC"/>
</dbReference>
<dbReference type="GO" id="GO:0043770">
    <property type="term" value="F:demethylmenaquinone methyltransferase activity"/>
    <property type="evidence" value="ECO:0007669"/>
    <property type="project" value="UniProtKB-UniRule"/>
</dbReference>
<dbReference type="GO" id="GO:0009234">
    <property type="term" value="P:menaquinone biosynthetic process"/>
    <property type="evidence" value="ECO:0007669"/>
    <property type="project" value="UniProtKB-UniRule"/>
</dbReference>
<dbReference type="GO" id="GO:0032259">
    <property type="term" value="P:methylation"/>
    <property type="evidence" value="ECO:0007669"/>
    <property type="project" value="UniProtKB-KW"/>
</dbReference>
<dbReference type="CDD" id="cd02440">
    <property type="entry name" value="AdoMet_MTases"/>
    <property type="match status" value="1"/>
</dbReference>
<dbReference type="Gene3D" id="3.40.50.150">
    <property type="entry name" value="Vaccinia Virus protein VP39"/>
    <property type="match status" value="1"/>
</dbReference>
<dbReference type="HAMAP" id="MF_01813">
    <property type="entry name" value="MenG_UbiE_methyltr"/>
    <property type="match status" value="1"/>
</dbReference>
<dbReference type="InterPro" id="IPR029063">
    <property type="entry name" value="SAM-dependent_MTases_sf"/>
</dbReference>
<dbReference type="InterPro" id="IPR004033">
    <property type="entry name" value="UbiE/COQ5_MeTrFase"/>
</dbReference>
<dbReference type="InterPro" id="IPR023576">
    <property type="entry name" value="UbiE/COQ5_MeTrFase_CS"/>
</dbReference>
<dbReference type="NCBIfam" id="TIGR01934">
    <property type="entry name" value="MenG_MenH_UbiE"/>
    <property type="match status" value="1"/>
</dbReference>
<dbReference type="NCBIfam" id="NF001244">
    <property type="entry name" value="PRK00216.1-5"/>
    <property type="match status" value="1"/>
</dbReference>
<dbReference type="PANTHER" id="PTHR43591:SF24">
    <property type="entry name" value="2-METHOXY-6-POLYPRENYL-1,4-BENZOQUINOL METHYLASE, MITOCHONDRIAL"/>
    <property type="match status" value="1"/>
</dbReference>
<dbReference type="PANTHER" id="PTHR43591">
    <property type="entry name" value="METHYLTRANSFERASE"/>
    <property type="match status" value="1"/>
</dbReference>
<dbReference type="Pfam" id="PF01209">
    <property type="entry name" value="Ubie_methyltran"/>
    <property type="match status" value="1"/>
</dbReference>
<dbReference type="SUPFAM" id="SSF53335">
    <property type="entry name" value="S-adenosyl-L-methionine-dependent methyltransferases"/>
    <property type="match status" value="1"/>
</dbReference>
<dbReference type="PROSITE" id="PS51608">
    <property type="entry name" value="SAM_MT_UBIE"/>
    <property type="match status" value="1"/>
</dbReference>
<dbReference type="PROSITE" id="PS01184">
    <property type="entry name" value="UBIE_2"/>
    <property type="match status" value="1"/>
</dbReference>
<evidence type="ECO:0000255" key="1">
    <source>
        <dbReference type="HAMAP-Rule" id="MF_01813"/>
    </source>
</evidence>
<sequence>MSNHSPNPEIIRNMFSKVAANYDKGNNVLSMGIHHLWRKKLVKYSGAKAGDQVLDCATGTGDLAIEFKKTVGTGAVTGTDFCAEMLIPAPGKAKERGLDITFEQADVTQLQYADNSFDVCSISFGIRNVGDPVKALKEMARVTRPGGKVMVLEFGQVNIPVFGALYNFYSQNILPKIGGIVTGQKEAYEYLQKSSAAFPCREGFLDLMKESGAYSKMEYITLTGGIAYIYKGTVK</sequence>
<name>UBIE_BDEBA</name>
<feature type="chain" id="PRO_0000193251" description="Ubiquinone/menaquinone biosynthesis C-methyltransferase UbiE">
    <location>
        <begin position="1"/>
        <end position="235"/>
    </location>
</feature>
<feature type="binding site" evidence="1">
    <location>
        <position position="60"/>
    </location>
    <ligand>
        <name>S-adenosyl-L-methionine</name>
        <dbReference type="ChEBI" id="CHEBI:59789"/>
    </ligand>
</feature>
<feature type="binding site" evidence="1">
    <location>
        <position position="80"/>
    </location>
    <ligand>
        <name>S-adenosyl-L-methionine</name>
        <dbReference type="ChEBI" id="CHEBI:59789"/>
    </ligand>
</feature>
<feature type="binding site" evidence="1">
    <location>
        <begin position="106"/>
        <end position="107"/>
    </location>
    <ligand>
        <name>S-adenosyl-L-methionine</name>
        <dbReference type="ChEBI" id="CHEBI:59789"/>
    </ligand>
</feature>
<feature type="binding site" evidence="1">
    <location>
        <position position="123"/>
    </location>
    <ligand>
        <name>S-adenosyl-L-methionine</name>
        <dbReference type="ChEBI" id="CHEBI:59789"/>
    </ligand>
</feature>
<reference key="1">
    <citation type="journal article" date="2004" name="Science">
        <title>A predator unmasked: life cycle of Bdellovibrio bacteriovorus from a genomic perspective.</title>
        <authorList>
            <person name="Rendulic S."/>
            <person name="Jagtap P."/>
            <person name="Rosinus A."/>
            <person name="Eppinger M."/>
            <person name="Baar C."/>
            <person name="Lanz C."/>
            <person name="Keller H."/>
            <person name="Lambert C."/>
            <person name="Evans K.J."/>
            <person name="Goesmann A."/>
            <person name="Meyer F."/>
            <person name="Sockett R.E."/>
            <person name="Schuster S.C."/>
        </authorList>
    </citation>
    <scope>NUCLEOTIDE SEQUENCE [LARGE SCALE GENOMIC DNA]</scope>
    <source>
        <strain>ATCC 15356 / DSM 50701 / NCIMB 9529 / HD100</strain>
    </source>
</reference>
<accession>Q6MHQ3</accession>